<organism>
    <name type="scientific">Canis lupus familiaris</name>
    <name type="common">Dog</name>
    <name type="synonym">Canis familiaris</name>
    <dbReference type="NCBI Taxonomy" id="9615"/>
    <lineage>
        <taxon>Eukaryota</taxon>
        <taxon>Metazoa</taxon>
        <taxon>Chordata</taxon>
        <taxon>Craniata</taxon>
        <taxon>Vertebrata</taxon>
        <taxon>Euteleostomi</taxon>
        <taxon>Mammalia</taxon>
        <taxon>Eutheria</taxon>
        <taxon>Laurasiatheria</taxon>
        <taxon>Carnivora</taxon>
        <taxon>Caniformia</taxon>
        <taxon>Canidae</taxon>
        <taxon>Canis</taxon>
    </lineage>
</organism>
<accession>Q9ZZ59</accession>
<sequence length="98" mass="10862">MSMVYINIFLAFILSLMGMLVYRSHLMSSLLCLEGMMLSLFVMMSVTILNNHLTLASMMPIVLLVFAACEAALGLSLLVMVSNTYGTDYVQNLNLLQC</sequence>
<name>NU4LM_CANLF</name>
<reference key="1">
    <citation type="journal article" date="1998" name="Mol. Phylogenet. Evol.">
        <title>The complete nucleotide sequence of the domestic dog (Canis familiaris) mitochondrial genome.</title>
        <authorList>
            <person name="Kim K.S."/>
            <person name="Lee S.E."/>
            <person name="Jeong H.W."/>
            <person name="Ha J.H."/>
        </authorList>
    </citation>
    <scope>NUCLEOTIDE SEQUENCE [GENOMIC DNA]</scope>
    <source>
        <strain evidence="5">Boxer</strain>
    </source>
</reference>
<reference key="2">
    <citation type="submission" date="2004-08" db="EMBL/GenBank/DDBJ databases">
        <title>The complete mitochondrial DNA sequence of the Beagle dog (Canis familiaris).</title>
        <authorList>
            <person name="Zhu S."/>
            <person name="Xu Q."/>
            <person name="Chang H."/>
        </authorList>
    </citation>
    <scope>NUCLEOTIDE SEQUENCE [GENOMIC DNA]</scope>
    <source>
        <strain>Beagle</strain>
    </source>
</reference>
<proteinExistence type="inferred from homology"/>
<evidence type="ECO:0000250" key="1">
    <source>
        <dbReference type="UniProtKB" id="P03901"/>
    </source>
</evidence>
<evidence type="ECO:0000250" key="2">
    <source>
        <dbReference type="UniProtKB" id="P03902"/>
    </source>
</evidence>
<evidence type="ECO:0000255" key="3"/>
<evidence type="ECO:0000305" key="4"/>
<evidence type="ECO:0000312" key="5">
    <source>
        <dbReference type="Proteomes" id="UP000002254"/>
    </source>
</evidence>
<protein>
    <recommendedName>
        <fullName>NADH-ubiquinone oxidoreductase chain 4L</fullName>
        <ecNumber>7.1.1.2</ecNumber>
    </recommendedName>
    <alternativeName>
        <fullName>NADH dehydrogenase subunit 4L</fullName>
    </alternativeName>
</protein>
<geneLocation type="mitochondrion"/>
<gene>
    <name type="primary">MT-ND4L</name>
    <name type="synonym">MTND4L</name>
    <name type="synonym">NADH4L</name>
    <name type="synonym">ND4L</name>
</gene>
<feature type="chain" id="PRO_0000118402" description="NADH-ubiquinone oxidoreductase chain 4L">
    <location>
        <begin position="1"/>
        <end position="98"/>
    </location>
</feature>
<feature type="transmembrane region" description="Helical" evidence="3">
    <location>
        <begin position="1"/>
        <end position="21"/>
    </location>
</feature>
<feature type="transmembrane region" description="Helical" evidence="3">
    <location>
        <begin position="29"/>
        <end position="49"/>
    </location>
</feature>
<feature type="transmembrane region" description="Helical" evidence="3">
    <location>
        <begin position="61"/>
        <end position="81"/>
    </location>
</feature>
<keyword id="KW-0249">Electron transport</keyword>
<keyword id="KW-0472">Membrane</keyword>
<keyword id="KW-0496">Mitochondrion</keyword>
<keyword id="KW-0999">Mitochondrion inner membrane</keyword>
<keyword id="KW-0520">NAD</keyword>
<keyword id="KW-1185">Reference proteome</keyword>
<keyword id="KW-0679">Respiratory chain</keyword>
<keyword id="KW-1278">Translocase</keyword>
<keyword id="KW-0812">Transmembrane</keyword>
<keyword id="KW-1133">Transmembrane helix</keyword>
<keyword id="KW-0813">Transport</keyword>
<keyword id="KW-0830">Ubiquinone</keyword>
<dbReference type="EC" id="7.1.1.2"/>
<dbReference type="EMBL" id="U96639">
    <property type="protein sequence ID" value="AAD04771.1"/>
    <property type="molecule type" value="Genomic_DNA"/>
</dbReference>
<dbReference type="EMBL" id="AY729880">
    <property type="protein sequence ID" value="AAU12155.1"/>
    <property type="molecule type" value="Genomic_DNA"/>
</dbReference>
<dbReference type="PIR" id="T11501">
    <property type="entry name" value="T11501"/>
</dbReference>
<dbReference type="RefSeq" id="NP_008479.1">
    <property type="nucleotide sequence ID" value="NC_002008.4"/>
</dbReference>
<dbReference type="SMR" id="Q9ZZ59"/>
<dbReference type="FunCoup" id="Q9ZZ59">
    <property type="interactions" value="27"/>
</dbReference>
<dbReference type="STRING" id="9615.ENSCAFP00000030317"/>
<dbReference type="PaxDb" id="9612-ENSCAFP00000030317"/>
<dbReference type="GeneID" id="804482"/>
<dbReference type="KEGG" id="cfa:804482"/>
<dbReference type="CTD" id="4539"/>
<dbReference type="eggNOG" id="KOG4669">
    <property type="taxonomic scope" value="Eukaryota"/>
</dbReference>
<dbReference type="HOGENOM" id="CLU_182394_0_0_1"/>
<dbReference type="InParanoid" id="Q9ZZ59"/>
<dbReference type="OMA" id="MYRSHLM"/>
<dbReference type="TreeFam" id="TF338190"/>
<dbReference type="Proteomes" id="UP000002254">
    <property type="component" value="Mitochondrion"/>
</dbReference>
<dbReference type="Proteomes" id="UP000694429">
    <property type="component" value="Unplaced"/>
</dbReference>
<dbReference type="Proteomes" id="UP000694542">
    <property type="component" value="Unassembled WGS sequence"/>
</dbReference>
<dbReference type="Proteomes" id="UP000805418">
    <property type="component" value="Mitochondrion MT"/>
</dbReference>
<dbReference type="Bgee" id="ENSCAFG00000022734">
    <property type="expression patterns" value="Expressed in heart right ventricle and 47 other cell types or tissues"/>
</dbReference>
<dbReference type="GO" id="GO:0005743">
    <property type="term" value="C:mitochondrial inner membrane"/>
    <property type="evidence" value="ECO:0000250"/>
    <property type="project" value="UniProtKB"/>
</dbReference>
<dbReference type="GO" id="GO:0045271">
    <property type="term" value="C:respiratory chain complex I"/>
    <property type="evidence" value="ECO:0000250"/>
    <property type="project" value="UniProtKB"/>
</dbReference>
<dbReference type="GO" id="GO:0008137">
    <property type="term" value="F:NADH dehydrogenase (ubiquinone) activity"/>
    <property type="evidence" value="ECO:0000250"/>
    <property type="project" value="UniProtKB"/>
</dbReference>
<dbReference type="GO" id="GO:0042773">
    <property type="term" value="P:ATP synthesis coupled electron transport"/>
    <property type="evidence" value="ECO:0007669"/>
    <property type="project" value="InterPro"/>
</dbReference>
<dbReference type="FunFam" id="1.10.287.3510:FF:000002">
    <property type="entry name" value="NADH-ubiquinone oxidoreductase chain 4L"/>
    <property type="match status" value="1"/>
</dbReference>
<dbReference type="Gene3D" id="1.10.287.3510">
    <property type="match status" value="1"/>
</dbReference>
<dbReference type="InterPro" id="IPR001133">
    <property type="entry name" value="NADH_UbQ_OxRdtase_chain4L/K"/>
</dbReference>
<dbReference type="InterPro" id="IPR039428">
    <property type="entry name" value="NUOK/Mnh_C1-like"/>
</dbReference>
<dbReference type="PANTHER" id="PTHR11434:SF0">
    <property type="entry name" value="NADH-UBIQUINONE OXIDOREDUCTASE CHAIN 4L"/>
    <property type="match status" value="1"/>
</dbReference>
<dbReference type="PANTHER" id="PTHR11434">
    <property type="entry name" value="NADH-UBIQUINONE OXIDOREDUCTASE SUBUNIT ND4L"/>
    <property type="match status" value="1"/>
</dbReference>
<dbReference type="Pfam" id="PF00420">
    <property type="entry name" value="Oxidored_q2"/>
    <property type="match status" value="1"/>
</dbReference>
<comment type="function">
    <text evidence="1">Core subunit of the mitochondrial membrane respiratory chain NADH dehydrogenase (Complex I) which catalyzes electron transfer from NADH through the respiratory chain, using ubiquinone as an electron acceptor. Part of the enzyme membrane arm which is embedded in the lipid bilayer and involved in proton translocation.</text>
</comment>
<comment type="catalytic activity">
    <reaction evidence="1">
        <text>a ubiquinone + NADH + 5 H(+)(in) = a ubiquinol + NAD(+) + 4 H(+)(out)</text>
        <dbReference type="Rhea" id="RHEA:29091"/>
        <dbReference type="Rhea" id="RHEA-COMP:9565"/>
        <dbReference type="Rhea" id="RHEA-COMP:9566"/>
        <dbReference type="ChEBI" id="CHEBI:15378"/>
        <dbReference type="ChEBI" id="CHEBI:16389"/>
        <dbReference type="ChEBI" id="CHEBI:17976"/>
        <dbReference type="ChEBI" id="CHEBI:57540"/>
        <dbReference type="ChEBI" id="CHEBI:57945"/>
        <dbReference type="EC" id="7.1.1.2"/>
    </reaction>
    <physiologicalReaction direction="left-to-right" evidence="1">
        <dbReference type="Rhea" id="RHEA:29092"/>
    </physiologicalReaction>
</comment>
<comment type="subunit">
    <text evidence="2">Core subunit of respiratory chain NADH dehydrogenase (Complex I) which is composed of 45 different subunits.</text>
</comment>
<comment type="subcellular location">
    <subcellularLocation>
        <location evidence="2">Mitochondrion inner membrane</location>
        <topology evidence="3">Multi-pass membrane protein</topology>
    </subcellularLocation>
</comment>
<comment type="similarity">
    <text evidence="4">Belongs to the complex I subunit 4L family.</text>
</comment>